<proteinExistence type="inferred from homology"/>
<sequence>MFDVTLLILLGLAALGFISHNTTVAVSILVLIIVRVTPLNTFFPWIEKQGLTVGIIILTIGVMAPIASGTLPSSTLLHSFENWKSLVAIAVGVFVSWLGGRGVALMGNQPQLVAGLLVGTVLGVALFRGVPVGPLIAAGLVSLIVGRQ</sequence>
<comment type="subcellular location">
    <subcellularLocation>
        <location evidence="1">Cell membrane</location>
        <topology evidence="1">Multi-pass membrane protein</topology>
    </subcellularLocation>
</comment>
<comment type="similarity">
    <text evidence="1">Belongs to the UPF0756 family.</text>
</comment>
<comment type="sequence caution" evidence="2">
    <conflict type="erroneous initiation">
        <sequence resource="EMBL-CDS" id="ABX21589"/>
    </conflict>
</comment>
<feature type="chain" id="PRO_0000388922" description="UPF0756 membrane protein YeaL">
    <location>
        <begin position="1"/>
        <end position="148"/>
    </location>
</feature>
<feature type="transmembrane region" description="Helical" evidence="1">
    <location>
        <begin position="14"/>
        <end position="34"/>
    </location>
</feature>
<feature type="transmembrane region" description="Helical" evidence="1">
    <location>
        <begin position="51"/>
        <end position="71"/>
    </location>
</feature>
<feature type="transmembrane region" description="Helical" evidence="1">
    <location>
        <begin position="86"/>
        <end position="106"/>
    </location>
</feature>
<feature type="transmembrane region" description="Helical" evidence="1">
    <location>
        <begin position="121"/>
        <end position="141"/>
    </location>
</feature>
<name>YEAL_SALAR</name>
<evidence type="ECO:0000255" key="1">
    <source>
        <dbReference type="HAMAP-Rule" id="MF_01874"/>
    </source>
</evidence>
<evidence type="ECO:0000305" key="2"/>
<organism>
    <name type="scientific">Salmonella arizonae (strain ATCC BAA-731 / CDC346-86 / RSK2980)</name>
    <dbReference type="NCBI Taxonomy" id="41514"/>
    <lineage>
        <taxon>Bacteria</taxon>
        <taxon>Pseudomonadati</taxon>
        <taxon>Pseudomonadota</taxon>
        <taxon>Gammaproteobacteria</taxon>
        <taxon>Enterobacterales</taxon>
        <taxon>Enterobacteriaceae</taxon>
        <taxon>Salmonella</taxon>
    </lineage>
</organism>
<accession>A9MFI4</accession>
<keyword id="KW-1003">Cell membrane</keyword>
<keyword id="KW-0472">Membrane</keyword>
<keyword id="KW-1185">Reference proteome</keyword>
<keyword id="KW-0812">Transmembrane</keyword>
<keyword id="KW-1133">Transmembrane helix</keyword>
<gene>
    <name evidence="1" type="primary">yeaL</name>
    <name type="ordered locus">SARI_01699</name>
</gene>
<protein>
    <recommendedName>
        <fullName evidence="1">UPF0756 membrane protein YeaL</fullName>
    </recommendedName>
</protein>
<reference key="1">
    <citation type="submission" date="2007-11" db="EMBL/GenBank/DDBJ databases">
        <authorList>
            <consortium name="The Salmonella enterica serovar Arizonae Genome Sequencing Project"/>
            <person name="McClelland M."/>
            <person name="Sanderson E.K."/>
            <person name="Porwollik S."/>
            <person name="Spieth J."/>
            <person name="Clifton W.S."/>
            <person name="Fulton R."/>
            <person name="Chunyan W."/>
            <person name="Wollam A."/>
            <person name="Shah N."/>
            <person name="Pepin K."/>
            <person name="Bhonagiri V."/>
            <person name="Nash W."/>
            <person name="Johnson M."/>
            <person name="Thiruvilangam P."/>
            <person name="Wilson R."/>
        </authorList>
    </citation>
    <scope>NUCLEOTIDE SEQUENCE [LARGE SCALE GENOMIC DNA]</scope>
    <source>
        <strain>ATCC BAA-731 / CDC346-86 / RSK2980</strain>
    </source>
</reference>
<dbReference type="EMBL" id="CP000880">
    <property type="protein sequence ID" value="ABX21589.1"/>
    <property type="status" value="ALT_INIT"/>
    <property type="molecule type" value="Genomic_DNA"/>
</dbReference>
<dbReference type="STRING" id="41514.SARI_01699"/>
<dbReference type="KEGG" id="ses:SARI_01699"/>
<dbReference type="HOGENOM" id="CLU_125889_0_0_6"/>
<dbReference type="Proteomes" id="UP000002084">
    <property type="component" value="Chromosome"/>
</dbReference>
<dbReference type="GO" id="GO:0005886">
    <property type="term" value="C:plasma membrane"/>
    <property type="evidence" value="ECO:0007669"/>
    <property type="project" value="UniProtKB-SubCell"/>
</dbReference>
<dbReference type="HAMAP" id="MF_01874">
    <property type="entry name" value="UPF0756"/>
    <property type="match status" value="1"/>
</dbReference>
<dbReference type="InterPro" id="IPR007382">
    <property type="entry name" value="UPF0756_TM"/>
</dbReference>
<dbReference type="PANTHER" id="PTHR38452">
    <property type="entry name" value="UPF0756 MEMBRANE PROTEIN YEAL"/>
    <property type="match status" value="1"/>
</dbReference>
<dbReference type="PANTHER" id="PTHR38452:SF1">
    <property type="entry name" value="UPF0756 MEMBRANE PROTEIN YEAL"/>
    <property type="match status" value="1"/>
</dbReference>
<dbReference type="Pfam" id="PF04284">
    <property type="entry name" value="DUF441"/>
    <property type="match status" value="1"/>
</dbReference>